<name>CBID_BURPS</name>
<comment type="function">
    <text evidence="1">Catalyzes the methylation of C-1 in cobalt-precorrin-5B to form cobalt-precorrin-6A.</text>
</comment>
<comment type="catalytic activity">
    <reaction evidence="1">
        <text>Co-precorrin-5B + S-adenosyl-L-methionine = Co-precorrin-6A + S-adenosyl-L-homocysteine</text>
        <dbReference type="Rhea" id="RHEA:26285"/>
        <dbReference type="ChEBI" id="CHEBI:57856"/>
        <dbReference type="ChEBI" id="CHEBI:59789"/>
        <dbReference type="ChEBI" id="CHEBI:60063"/>
        <dbReference type="ChEBI" id="CHEBI:60064"/>
        <dbReference type="EC" id="2.1.1.195"/>
    </reaction>
</comment>
<comment type="pathway">
    <text evidence="1">Cofactor biosynthesis; adenosylcobalamin biosynthesis; cob(II)yrinate a,c-diamide from sirohydrochlorin (anaerobic route): step 6/10.</text>
</comment>
<comment type="similarity">
    <text evidence="1">Belongs to the CbiD family.</text>
</comment>
<protein>
    <recommendedName>
        <fullName evidence="1">Cobalt-precorrin-5B C(1)-methyltransferase</fullName>
        <ecNumber evidence="1">2.1.1.195</ecNumber>
    </recommendedName>
    <alternativeName>
        <fullName evidence="1">Cobalt-precorrin-6A synthase</fullName>
    </alternativeName>
</protein>
<evidence type="ECO:0000255" key="1">
    <source>
        <dbReference type="HAMAP-Rule" id="MF_00787"/>
    </source>
</evidence>
<gene>
    <name evidence="1" type="primary">cbiD</name>
    <name type="ordered locus">BPSL1757</name>
</gene>
<keyword id="KW-0169">Cobalamin biosynthesis</keyword>
<keyword id="KW-0489">Methyltransferase</keyword>
<keyword id="KW-1185">Reference proteome</keyword>
<keyword id="KW-0949">S-adenosyl-L-methionine</keyword>
<keyword id="KW-0808">Transferase</keyword>
<feature type="chain" id="PRO_0000257752" description="Cobalt-precorrin-5B C(1)-methyltransferase">
    <location>
        <begin position="1"/>
        <end position="363"/>
    </location>
</feature>
<sequence>MRDETPEQPAPLRFGYTTGSCASATSLAAARLLLTGVASDTVDIVLPKGQHVAMRLAFCRATDDGGAEAGTIKDAGDDPDVTHGALVFARVRLVHEPGVRFRAGPGVGTVTRAGLPIAVGEPAINPVPRRMMTEHLAALAAEHGYAGGFDVAIGVENGEALARKTMNPRLGIVGGLSILGTTGIVRPFSCSAYIASIHQGIDVARANGVTHIAACTGNASEDAVRARYGLPDIALIEMGDFAGAVLKYLRRASVARLTLCGGFGKLSKLAAGHLDLHSRHSSIDLPLLAEWAGEAGASAVLQHEIRAANTSQQALALALAHHVPLGDVVCAHARRVARDIVPGEVDVETLAIDREGRIVGVAP</sequence>
<accession>Q63U59</accession>
<reference key="1">
    <citation type="journal article" date="2004" name="Proc. Natl. Acad. Sci. U.S.A.">
        <title>Genomic plasticity of the causative agent of melioidosis, Burkholderia pseudomallei.</title>
        <authorList>
            <person name="Holden M.T.G."/>
            <person name="Titball R.W."/>
            <person name="Peacock S.J."/>
            <person name="Cerdeno-Tarraga A.-M."/>
            <person name="Atkins T."/>
            <person name="Crossman L.C."/>
            <person name="Pitt T."/>
            <person name="Churcher C."/>
            <person name="Mungall K.L."/>
            <person name="Bentley S.D."/>
            <person name="Sebaihia M."/>
            <person name="Thomson N.R."/>
            <person name="Bason N."/>
            <person name="Beacham I.R."/>
            <person name="Brooks K."/>
            <person name="Brown K.A."/>
            <person name="Brown N.F."/>
            <person name="Challis G.L."/>
            <person name="Cherevach I."/>
            <person name="Chillingworth T."/>
            <person name="Cronin A."/>
            <person name="Crossett B."/>
            <person name="Davis P."/>
            <person name="DeShazer D."/>
            <person name="Feltwell T."/>
            <person name="Fraser A."/>
            <person name="Hance Z."/>
            <person name="Hauser H."/>
            <person name="Holroyd S."/>
            <person name="Jagels K."/>
            <person name="Keith K.E."/>
            <person name="Maddison M."/>
            <person name="Moule S."/>
            <person name="Price C."/>
            <person name="Quail M.A."/>
            <person name="Rabbinowitsch E."/>
            <person name="Rutherford K."/>
            <person name="Sanders M."/>
            <person name="Simmonds M."/>
            <person name="Songsivilai S."/>
            <person name="Stevens K."/>
            <person name="Tumapa S."/>
            <person name="Vesaratchavest M."/>
            <person name="Whitehead S."/>
            <person name="Yeats C."/>
            <person name="Barrell B.G."/>
            <person name="Oyston P.C.F."/>
            <person name="Parkhill J."/>
        </authorList>
    </citation>
    <scope>NUCLEOTIDE SEQUENCE [LARGE SCALE GENOMIC DNA]</scope>
    <source>
        <strain>K96243</strain>
    </source>
</reference>
<proteinExistence type="inferred from homology"/>
<dbReference type="EC" id="2.1.1.195" evidence="1"/>
<dbReference type="EMBL" id="BX571965">
    <property type="protein sequence ID" value="CAH35756.1"/>
    <property type="molecule type" value="Genomic_DNA"/>
</dbReference>
<dbReference type="RefSeq" id="YP_108357.1">
    <property type="nucleotide sequence ID" value="NC_006350.1"/>
</dbReference>
<dbReference type="SMR" id="Q63U59"/>
<dbReference type="STRING" id="272560.BPSL1757"/>
<dbReference type="KEGG" id="bps:BPSL1757"/>
<dbReference type="PATRIC" id="fig|272560.51.peg.3857"/>
<dbReference type="eggNOG" id="COG1903">
    <property type="taxonomic scope" value="Bacteria"/>
</dbReference>
<dbReference type="UniPathway" id="UPA00148">
    <property type="reaction ID" value="UER00227"/>
</dbReference>
<dbReference type="Proteomes" id="UP000000605">
    <property type="component" value="Chromosome 1"/>
</dbReference>
<dbReference type="GO" id="GO:0043780">
    <property type="term" value="F:cobalt-precorrin-5B C1-methyltransferase activity"/>
    <property type="evidence" value="ECO:0007669"/>
    <property type="project" value="RHEA"/>
</dbReference>
<dbReference type="GO" id="GO:0019251">
    <property type="term" value="P:anaerobic cobalamin biosynthetic process"/>
    <property type="evidence" value="ECO:0007669"/>
    <property type="project" value="UniProtKB-UniRule"/>
</dbReference>
<dbReference type="GO" id="GO:0032259">
    <property type="term" value="P:methylation"/>
    <property type="evidence" value="ECO:0007669"/>
    <property type="project" value="UniProtKB-KW"/>
</dbReference>
<dbReference type="Gene3D" id="3.30.2110.10">
    <property type="entry name" value="CbiD-like"/>
    <property type="match status" value="1"/>
</dbReference>
<dbReference type="HAMAP" id="MF_00787">
    <property type="entry name" value="CbiD"/>
    <property type="match status" value="1"/>
</dbReference>
<dbReference type="InterPro" id="IPR002748">
    <property type="entry name" value="CbiD"/>
</dbReference>
<dbReference type="InterPro" id="IPR036074">
    <property type="entry name" value="CbiD_sf"/>
</dbReference>
<dbReference type="NCBIfam" id="TIGR00312">
    <property type="entry name" value="cbiD"/>
    <property type="match status" value="1"/>
</dbReference>
<dbReference type="NCBIfam" id="NF000849">
    <property type="entry name" value="PRK00075.1-1"/>
    <property type="match status" value="1"/>
</dbReference>
<dbReference type="PANTHER" id="PTHR35863">
    <property type="entry name" value="COBALT-PRECORRIN-5B C(1)-METHYLTRANSFERASE"/>
    <property type="match status" value="1"/>
</dbReference>
<dbReference type="PANTHER" id="PTHR35863:SF1">
    <property type="entry name" value="COBALT-PRECORRIN-5B C(1)-METHYLTRANSFERASE"/>
    <property type="match status" value="1"/>
</dbReference>
<dbReference type="Pfam" id="PF01888">
    <property type="entry name" value="CbiD"/>
    <property type="match status" value="1"/>
</dbReference>
<dbReference type="PIRSF" id="PIRSF026782">
    <property type="entry name" value="CbiD"/>
    <property type="match status" value="1"/>
</dbReference>
<dbReference type="SUPFAM" id="SSF111342">
    <property type="entry name" value="CbiD-like"/>
    <property type="match status" value="1"/>
</dbReference>
<organism>
    <name type="scientific">Burkholderia pseudomallei (strain K96243)</name>
    <dbReference type="NCBI Taxonomy" id="272560"/>
    <lineage>
        <taxon>Bacteria</taxon>
        <taxon>Pseudomonadati</taxon>
        <taxon>Pseudomonadota</taxon>
        <taxon>Betaproteobacteria</taxon>
        <taxon>Burkholderiales</taxon>
        <taxon>Burkholderiaceae</taxon>
        <taxon>Burkholderia</taxon>
        <taxon>pseudomallei group</taxon>
    </lineage>
</organism>